<protein>
    <recommendedName>
        <fullName>Probable copper-transporting ATPase PacS</fullName>
        <ecNumber>7.2.2.8</ecNumber>
    </recommendedName>
</protein>
<proteinExistence type="inferred from homology"/>
<comment type="function">
    <text>May play a role in the osmotic adaptation.</text>
</comment>
<comment type="catalytic activity">
    <reaction>
        <text>Cu(+)(in) + ATP + H2O = Cu(+)(out) + ADP + phosphate + H(+)</text>
        <dbReference type="Rhea" id="RHEA:25792"/>
        <dbReference type="ChEBI" id="CHEBI:15377"/>
        <dbReference type="ChEBI" id="CHEBI:15378"/>
        <dbReference type="ChEBI" id="CHEBI:30616"/>
        <dbReference type="ChEBI" id="CHEBI:43474"/>
        <dbReference type="ChEBI" id="CHEBI:49552"/>
        <dbReference type="ChEBI" id="CHEBI:456216"/>
        <dbReference type="EC" id="7.2.2.8"/>
    </reaction>
</comment>
<comment type="subcellular location">
    <subcellularLocation>
        <location>Cell membrane</location>
        <topology>Multi-pass membrane protein</topology>
    </subcellularLocation>
</comment>
<comment type="similarity">
    <text evidence="4">Belongs to the cation transport ATPase (P-type) (TC 3.A.3) family. Type IB subfamily.</text>
</comment>
<evidence type="ECO:0000250" key="1"/>
<evidence type="ECO:0000255" key="2"/>
<evidence type="ECO:0000255" key="3">
    <source>
        <dbReference type="PROSITE-ProRule" id="PRU00280"/>
    </source>
</evidence>
<evidence type="ECO:0000305" key="4"/>
<feature type="chain" id="PRO_0000046160" description="Probable copper-transporting ATPase PacS">
    <location>
        <begin position="1"/>
        <end position="747"/>
    </location>
</feature>
<feature type="topological domain" description="Cytoplasmic" evidence="2">
    <location>
        <begin position="1"/>
        <end position="101"/>
    </location>
</feature>
<feature type="transmembrane region" description="Helical" evidence="2">
    <location>
        <begin position="102"/>
        <end position="122"/>
    </location>
</feature>
<feature type="topological domain" description="Extracellular" evidence="2">
    <location>
        <begin position="123"/>
        <end position="132"/>
    </location>
</feature>
<feature type="transmembrane region" description="Helical" evidence="2">
    <location>
        <begin position="133"/>
        <end position="151"/>
    </location>
</feature>
<feature type="topological domain" description="Cytoplasmic" evidence="2">
    <location>
        <begin position="152"/>
        <end position="158"/>
    </location>
</feature>
<feature type="transmembrane region" description="Helical" evidence="2">
    <location>
        <begin position="159"/>
        <end position="179"/>
    </location>
</feature>
<feature type="topological domain" description="Extracellular" evidence="2">
    <location>
        <begin position="180"/>
        <end position="199"/>
    </location>
</feature>
<feature type="transmembrane region" description="Helical" evidence="2">
    <location>
        <begin position="200"/>
        <end position="220"/>
    </location>
</feature>
<feature type="topological domain" description="Cytoplasmic" evidence="2">
    <location>
        <begin position="221"/>
        <end position="348"/>
    </location>
</feature>
<feature type="transmembrane region" description="Helical" evidence="2">
    <location>
        <begin position="349"/>
        <end position="371"/>
    </location>
</feature>
<feature type="topological domain" description="Extracellular" evidence="2">
    <location>
        <begin position="372"/>
        <end position="378"/>
    </location>
</feature>
<feature type="transmembrane region" description="Helical" evidence="2">
    <location>
        <begin position="379"/>
        <end position="396"/>
    </location>
</feature>
<feature type="topological domain" description="Cytoplasmic" evidence="2">
    <location>
        <begin position="397"/>
        <end position="688"/>
    </location>
</feature>
<feature type="transmembrane region" description="Helical" evidence="2">
    <location>
        <begin position="689"/>
        <end position="708"/>
    </location>
</feature>
<feature type="topological domain" description="Extracellular" evidence="2">
    <location>
        <begin position="709"/>
        <end position="720"/>
    </location>
</feature>
<feature type="transmembrane region" description="Helical" evidence="2">
    <location>
        <begin position="721"/>
        <end position="739"/>
    </location>
</feature>
<feature type="topological domain" description="Cytoplasmic" evidence="2">
    <location>
        <begin position="740"/>
        <end position="747"/>
    </location>
</feature>
<feature type="domain" description="HMA" evidence="3">
    <location>
        <begin position="3"/>
        <end position="69"/>
    </location>
</feature>
<feature type="active site" description="4-aspartylphosphate intermediate" evidence="1">
    <location>
        <position position="434"/>
    </location>
</feature>
<feature type="binding site" evidence="3">
    <location>
        <position position="14"/>
    </location>
    <ligand>
        <name>a metal cation</name>
        <dbReference type="ChEBI" id="CHEBI:25213"/>
    </ligand>
</feature>
<feature type="binding site" evidence="3">
    <location>
        <position position="17"/>
    </location>
    <ligand>
        <name>a metal cation</name>
        <dbReference type="ChEBI" id="CHEBI:25213"/>
    </ligand>
</feature>
<feature type="binding site">
    <location>
        <position position="634"/>
    </location>
    <ligand>
        <name>Mg(2+)</name>
        <dbReference type="ChEBI" id="CHEBI:18420"/>
    </ligand>
</feature>
<feature type="binding site">
    <location>
        <position position="638"/>
    </location>
    <ligand>
        <name>Mg(2+)</name>
        <dbReference type="ChEBI" id="CHEBI:18420"/>
    </ligand>
</feature>
<feature type="sequence conflict" description="In Ref. 1; BAA03907." evidence="4" ref="1">
    <original>V</original>
    <variation>L</variation>
    <location>
        <position position="366"/>
    </location>
</feature>
<feature type="sequence conflict" description="In Ref. 1; BAA03907." evidence="4" ref="1">
    <original>L</original>
    <variation>M</variation>
    <location>
        <position position="386"/>
    </location>
</feature>
<dbReference type="EC" id="7.2.2.8"/>
<dbReference type="EMBL" id="D16437">
    <property type="protein sequence ID" value="BAA03907.1"/>
    <property type="molecule type" value="Genomic_DNA"/>
</dbReference>
<dbReference type="EMBL" id="AY120852">
    <property type="protein sequence ID" value="AAM82673.1"/>
    <property type="molecule type" value="Genomic_DNA"/>
</dbReference>
<dbReference type="EMBL" id="CP000100">
    <property type="protein sequence ID" value="ABB57600.1"/>
    <property type="molecule type" value="Genomic_DNA"/>
</dbReference>
<dbReference type="RefSeq" id="WP_011378089.1">
    <property type="nucleotide sequence ID" value="NZ_JACJTX010000004.1"/>
</dbReference>
<dbReference type="SMR" id="P37279"/>
<dbReference type="STRING" id="1140.Synpcc7942_1570"/>
<dbReference type="PaxDb" id="1140-Synpcc7942_1570"/>
<dbReference type="KEGG" id="syf:Synpcc7942_1570"/>
<dbReference type="eggNOG" id="COG2217">
    <property type="taxonomic scope" value="Bacteria"/>
</dbReference>
<dbReference type="HOGENOM" id="CLU_001771_0_3_3"/>
<dbReference type="OrthoDB" id="438550at2"/>
<dbReference type="BioCyc" id="SYNEL:SYNPCC7942_1570-MONOMER"/>
<dbReference type="Proteomes" id="UP000889800">
    <property type="component" value="Chromosome"/>
</dbReference>
<dbReference type="GO" id="GO:0005886">
    <property type="term" value="C:plasma membrane"/>
    <property type="evidence" value="ECO:0007669"/>
    <property type="project" value="UniProtKB-SubCell"/>
</dbReference>
<dbReference type="GO" id="GO:0005524">
    <property type="term" value="F:ATP binding"/>
    <property type="evidence" value="ECO:0007669"/>
    <property type="project" value="UniProtKB-KW"/>
</dbReference>
<dbReference type="GO" id="GO:0016887">
    <property type="term" value="F:ATP hydrolysis activity"/>
    <property type="evidence" value="ECO:0007669"/>
    <property type="project" value="InterPro"/>
</dbReference>
<dbReference type="GO" id="GO:0005507">
    <property type="term" value="F:copper ion binding"/>
    <property type="evidence" value="ECO:0007669"/>
    <property type="project" value="TreeGrafter"/>
</dbReference>
<dbReference type="GO" id="GO:0043682">
    <property type="term" value="F:P-type divalent copper transporter activity"/>
    <property type="evidence" value="ECO:0007669"/>
    <property type="project" value="TreeGrafter"/>
</dbReference>
<dbReference type="GO" id="GO:0140581">
    <property type="term" value="F:P-type monovalent copper transporter activity"/>
    <property type="evidence" value="ECO:0007669"/>
    <property type="project" value="UniProtKB-EC"/>
</dbReference>
<dbReference type="GO" id="GO:0055070">
    <property type="term" value="P:copper ion homeostasis"/>
    <property type="evidence" value="ECO:0007669"/>
    <property type="project" value="TreeGrafter"/>
</dbReference>
<dbReference type="CDD" id="cd00371">
    <property type="entry name" value="HMA"/>
    <property type="match status" value="1"/>
</dbReference>
<dbReference type="CDD" id="cd02094">
    <property type="entry name" value="P-type_ATPase_Cu-like"/>
    <property type="match status" value="1"/>
</dbReference>
<dbReference type="FunFam" id="2.70.150.10:FF:000020">
    <property type="entry name" value="Copper-exporting P-type ATPase A"/>
    <property type="match status" value="1"/>
</dbReference>
<dbReference type="FunFam" id="3.30.70.100:FF:000005">
    <property type="entry name" value="Copper-exporting P-type ATPase A"/>
    <property type="match status" value="1"/>
</dbReference>
<dbReference type="Gene3D" id="3.30.70.100">
    <property type="match status" value="1"/>
</dbReference>
<dbReference type="Gene3D" id="3.40.1110.10">
    <property type="entry name" value="Calcium-transporting ATPase, cytoplasmic domain N"/>
    <property type="match status" value="1"/>
</dbReference>
<dbReference type="Gene3D" id="2.70.150.10">
    <property type="entry name" value="Calcium-transporting ATPase, cytoplasmic transduction domain A"/>
    <property type="match status" value="1"/>
</dbReference>
<dbReference type="Gene3D" id="3.40.50.1000">
    <property type="entry name" value="HAD superfamily/HAD-like"/>
    <property type="match status" value="1"/>
</dbReference>
<dbReference type="InterPro" id="IPR023299">
    <property type="entry name" value="ATPase_P-typ_cyto_dom_N"/>
</dbReference>
<dbReference type="InterPro" id="IPR018303">
    <property type="entry name" value="ATPase_P-typ_P_site"/>
</dbReference>
<dbReference type="InterPro" id="IPR023298">
    <property type="entry name" value="ATPase_P-typ_TM_dom_sf"/>
</dbReference>
<dbReference type="InterPro" id="IPR008250">
    <property type="entry name" value="ATPase_P-typ_transduc_dom_A_sf"/>
</dbReference>
<dbReference type="InterPro" id="IPR036412">
    <property type="entry name" value="HAD-like_sf"/>
</dbReference>
<dbReference type="InterPro" id="IPR023214">
    <property type="entry name" value="HAD_sf"/>
</dbReference>
<dbReference type="InterPro" id="IPR017969">
    <property type="entry name" value="Heavy-metal-associated_CS"/>
</dbReference>
<dbReference type="InterPro" id="IPR006121">
    <property type="entry name" value="HMA_dom"/>
</dbReference>
<dbReference type="InterPro" id="IPR036163">
    <property type="entry name" value="HMA_dom_sf"/>
</dbReference>
<dbReference type="InterPro" id="IPR027256">
    <property type="entry name" value="P-typ_ATPase_IB"/>
</dbReference>
<dbReference type="InterPro" id="IPR001757">
    <property type="entry name" value="P_typ_ATPase"/>
</dbReference>
<dbReference type="InterPro" id="IPR044492">
    <property type="entry name" value="P_typ_ATPase_HD_dom"/>
</dbReference>
<dbReference type="NCBIfam" id="TIGR01511">
    <property type="entry name" value="ATPase-IB1_Cu"/>
    <property type="match status" value="1"/>
</dbReference>
<dbReference type="NCBIfam" id="TIGR01525">
    <property type="entry name" value="ATPase-IB_hvy"/>
    <property type="match status" value="1"/>
</dbReference>
<dbReference type="NCBIfam" id="TIGR01494">
    <property type="entry name" value="ATPase_P-type"/>
    <property type="match status" value="2"/>
</dbReference>
<dbReference type="PANTHER" id="PTHR43520">
    <property type="entry name" value="ATP7, ISOFORM B"/>
    <property type="match status" value="1"/>
</dbReference>
<dbReference type="PANTHER" id="PTHR43520:SF8">
    <property type="entry name" value="P-TYPE CU(+) TRANSPORTER"/>
    <property type="match status" value="1"/>
</dbReference>
<dbReference type="Pfam" id="PF00122">
    <property type="entry name" value="E1-E2_ATPase"/>
    <property type="match status" value="1"/>
</dbReference>
<dbReference type="Pfam" id="PF00403">
    <property type="entry name" value="HMA"/>
    <property type="match status" value="1"/>
</dbReference>
<dbReference type="Pfam" id="PF00702">
    <property type="entry name" value="Hydrolase"/>
    <property type="match status" value="1"/>
</dbReference>
<dbReference type="PRINTS" id="PR00119">
    <property type="entry name" value="CATATPASE"/>
</dbReference>
<dbReference type="PRINTS" id="PR00943">
    <property type="entry name" value="CUATPASE"/>
</dbReference>
<dbReference type="SFLD" id="SFLDG00002">
    <property type="entry name" value="C1.7:_P-type_atpase_like"/>
    <property type="match status" value="1"/>
</dbReference>
<dbReference type="SFLD" id="SFLDF00027">
    <property type="entry name" value="p-type_atpase"/>
    <property type="match status" value="1"/>
</dbReference>
<dbReference type="SUPFAM" id="SSF81653">
    <property type="entry name" value="Calcium ATPase, transduction domain A"/>
    <property type="match status" value="1"/>
</dbReference>
<dbReference type="SUPFAM" id="SSF81665">
    <property type="entry name" value="Calcium ATPase, transmembrane domain M"/>
    <property type="match status" value="1"/>
</dbReference>
<dbReference type="SUPFAM" id="SSF56784">
    <property type="entry name" value="HAD-like"/>
    <property type="match status" value="1"/>
</dbReference>
<dbReference type="SUPFAM" id="SSF55008">
    <property type="entry name" value="HMA, heavy metal-associated domain"/>
    <property type="match status" value="1"/>
</dbReference>
<dbReference type="PROSITE" id="PS00154">
    <property type="entry name" value="ATPASE_E1_E2"/>
    <property type="match status" value="1"/>
</dbReference>
<dbReference type="PROSITE" id="PS01047">
    <property type="entry name" value="HMA_1"/>
    <property type="match status" value="1"/>
</dbReference>
<dbReference type="PROSITE" id="PS50846">
    <property type="entry name" value="HMA_2"/>
    <property type="match status" value="1"/>
</dbReference>
<keyword id="KW-0067">ATP-binding</keyword>
<keyword id="KW-1003">Cell membrane</keyword>
<keyword id="KW-0186">Copper</keyword>
<keyword id="KW-0187">Copper transport</keyword>
<keyword id="KW-0406">Ion transport</keyword>
<keyword id="KW-0460">Magnesium</keyword>
<keyword id="KW-0472">Membrane</keyword>
<keyword id="KW-0479">Metal-binding</keyword>
<keyword id="KW-0547">Nucleotide-binding</keyword>
<keyword id="KW-0597">Phosphoprotein</keyword>
<keyword id="KW-1185">Reference proteome</keyword>
<keyword id="KW-1278">Translocase</keyword>
<keyword id="KW-0812">Transmembrane</keyword>
<keyword id="KW-1133">Transmembrane helix</keyword>
<keyword id="KW-0813">Transport</keyword>
<reference key="1">
    <citation type="journal article" date="1993" name="FEBS Lett.">
        <title>The cyanobacterium, Synechococcus sp. PCC7942, possesses two distinct genes encoding cation-transporting P-type ATPases.</title>
        <authorList>
            <person name="Kanamaru K."/>
            <person name="Kashiwagi S."/>
            <person name="Mizuno T."/>
        </authorList>
    </citation>
    <scope>NUCLEOTIDE SEQUENCE [GENOMIC DNA]</scope>
</reference>
<reference key="2">
    <citation type="submission" date="2002-06" db="EMBL/GenBank/DDBJ databases">
        <title>Synechococcus elongatus PCC7942 cosmid 6C3.</title>
        <authorList>
            <person name="Holtman C.K."/>
            <person name="Sandoval P."/>
            <person name="Chen Y."/>
            <person name="Socias T."/>
            <person name="Mohler B.J."/>
            <person name="Gonzalez A."/>
            <person name="Salinas I."/>
            <person name="McMurtry S."/>
            <person name="Golden S.S."/>
            <person name="Youderian P."/>
        </authorList>
    </citation>
    <scope>NUCLEOTIDE SEQUENCE [GENOMIC DNA]</scope>
</reference>
<reference key="3">
    <citation type="submission" date="2005-08" db="EMBL/GenBank/DDBJ databases">
        <title>Complete sequence of chromosome 1 of Synechococcus elongatus PCC 7942.</title>
        <authorList>
            <consortium name="US DOE Joint Genome Institute"/>
            <person name="Copeland A."/>
            <person name="Lucas S."/>
            <person name="Lapidus A."/>
            <person name="Barry K."/>
            <person name="Detter J.C."/>
            <person name="Glavina T."/>
            <person name="Hammon N."/>
            <person name="Israni S."/>
            <person name="Pitluck S."/>
            <person name="Schmutz J."/>
            <person name="Larimer F."/>
            <person name="Land M."/>
            <person name="Kyrpides N."/>
            <person name="Lykidis A."/>
            <person name="Golden S."/>
            <person name="Richardson P."/>
        </authorList>
    </citation>
    <scope>NUCLEOTIDE SEQUENCE [LARGE SCALE GENOMIC DNA]</scope>
    <source>
        <strain>ATCC 33912 / PCC 7942 / FACHB-805</strain>
    </source>
</reference>
<gene>
    <name type="primary">pacS</name>
    <name type="ordered locus">Synpcc7942_1570</name>
    <name type="ORF">sed0002</name>
</gene>
<organism>
    <name type="scientific">Synechococcus elongatus (strain ATCC 33912 / PCC 7942 / FACHB-805)</name>
    <name type="common">Anacystis nidulans R2</name>
    <dbReference type="NCBI Taxonomy" id="1140"/>
    <lineage>
        <taxon>Bacteria</taxon>
        <taxon>Bacillati</taxon>
        <taxon>Cyanobacteriota</taxon>
        <taxon>Cyanophyceae</taxon>
        <taxon>Synechococcales</taxon>
        <taxon>Synechococcaceae</taxon>
        <taxon>Synechococcus</taxon>
    </lineage>
</organism>
<name>ATCS_SYNE7</name>
<accession>P37279</accession>
<accession>Q8KPV5</accession>
<sequence length="747" mass="79700">MVNQQTLTLRGMGCAACAGRIEALIQALPGVQECSVNFGAEQAQVCYDPALTQVAAIQAAIEAAGYHAFPLQDPWDNEVEAQERHRRARSQRQLAQRVWVSGLIASLLVIGSLPMMLGISIPGIPMWLHHPGLQLGLTLPVLWAGRSFFINAWKAFRQNTATMDTLVAVGTGAAFLYSLAVTLFPQWLTRQGLPPDVYYEAIAVIIALLLLGRSLEERAKGQTSAAIRQLIGLQAKTARVLRQGQELTLPITEVQVEDWVRVRPGEKVPVDGEVIDGRSTVDESMVTGESLPVQKQVGDEVIGATLNKTGSLTIRATRVGRETFLAQIVQLVQQAQASKAPIQRLADQVTGWFVPAVIAIAILTFVLWFNWIGNVTLALITAVGVLIIACPCALGLATPTSIMVGTGKGAEYGILIKSAESLELAQTIQTVILDKTGTLTQGQPSVTDFLAIGDRDQQQTLLGWAASLENYSEHPLAEAIVRYGEAQGITLSTVTDFEAIPGSGVQGQVEGIWLQIGTQRWLGELGIETSALQNQWEDWEAAGKTVVGVAADGHLQAILSIADQLKPSSVAVVRSLQRLGLQVVMLTGDNRRTADAIAQAVGITQVLAEVRPDQKAAQVAQLQSRGQVVAMVGDGINDAPALAQADVGIAIGTGTDVAIAASDITLISGDLQGIVTAIQLSRATMTNIRQNLFFAFIYNVAGIPIAAGILYPLLGWLLSPMLAGAAMAFSSVSVVTNALRLRQFQPR</sequence>